<dbReference type="EMBL" id="AB046210">
    <property type="protein sequence ID" value="BAB01766.1"/>
    <property type="molecule type" value="mRNA"/>
</dbReference>
<dbReference type="EMBL" id="AC000103">
    <property type="protein sequence ID" value="AAF97980.1"/>
    <property type="molecule type" value="Genomic_DNA"/>
</dbReference>
<dbReference type="EMBL" id="CP002684">
    <property type="protein sequence ID" value="AEE30526.1"/>
    <property type="molecule type" value="Genomic_DNA"/>
</dbReference>
<dbReference type="PIR" id="C86378">
    <property type="entry name" value="C86378"/>
</dbReference>
<dbReference type="RefSeq" id="NP_564217.1">
    <property type="nucleotide sequence ID" value="NM_102286.3"/>
</dbReference>
<dbReference type="SMR" id="Q9LRB5"/>
<dbReference type="BioGRID" id="24295">
    <property type="interactions" value="39"/>
</dbReference>
<dbReference type="FunCoup" id="Q9LRB5">
    <property type="interactions" value="37"/>
</dbReference>
<dbReference type="IntAct" id="Q9LRB5">
    <property type="interactions" value="39"/>
</dbReference>
<dbReference type="STRING" id="3702.Q9LRB5"/>
<dbReference type="TCDB" id="2.A.18.2.9">
    <property type="family name" value="the amino acid/auxin permease (aaap) family"/>
</dbReference>
<dbReference type="PaxDb" id="3702-AT1G24400.1"/>
<dbReference type="ProteomicsDB" id="238468"/>
<dbReference type="EnsemblPlants" id="AT1G24400.1">
    <property type="protein sequence ID" value="AT1G24400.1"/>
    <property type="gene ID" value="AT1G24400"/>
</dbReference>
<dbReference type="GeneID" id="839057"/>
<dbReference type="Gramene" id="AT1G24400.1">
    <property type="protein sequence ID" value="AT1G24400.1"/>
    <property type="gene ID" value="AT1G24400"/>
</dbReference>
<dbReference type="KEGG" id="ath:AT1G24400"/>
<dbReference type="Araport" id="AT1G24400"/>
<dbReference type="TAIR" id="AT1G24400">
    <property type="gene designation" value="LHT2"/>
</dbReference>
<dbReference type="eggNOG" id="KOG1303">
    <property type="taxonomic scope" value="Eukaryota"/>
</dbReference>
<dbReference type="HOGENOM" id="CLU_031160_0_0_1"/>
<dbReference type="InParanoid" id="Q9LRB5"/>
<dbReference type="OMA" id="FHINKGQ"/>
<dbReference type="OrthoDB" id="40134at2759"/>
<dbReference type="PhylomeDB" id="Q9LRB5"/>
<dbReference type="PRO" id="PR:Q9LRB5"/>
<dbReference type="Proteomes" id="UP000006548">
    <property type="component" value="Chromosome 1"/>
</dbReference>
<dbReference type="ExpressionAtlas" id="Q9LRB5">
    <property type="expression patterns" value="baseline and differential"/>
</dbReference>
<dbReference type="GO" id="GO:0005886">
    <property type="term" value="C:plasma membrane"/>
    <property type="evidence" value="ECO:0007669"/>
    <property type="project" value="UniProtKB-SubCell"/>
</dbReference>
<dbReference type="GO" id="GO:0015293">
    <property type="term" value="F:symporter activity"/>
    <property type="evidence" value="ECO:0007669"/>
    <property type="project" value="UniProtKB-KW"/>
</dbReference>
<dbReference type="GO" id="GO:0006865">
    <property type="term" value="P:amino acid transport"/>
    <property type="evidence" value="ECO:0007669"/>
    <property type="project" value="UniProtKB-KW"/>
</dbReference>
<dbReference type="FunFam" id="1.20.1740.10:FF:000033">
    <property type="entry name" value="Lysine histidine transporter 1"/>
    <property type="match status" value="1"/>
</dbReference>
<dbReference type="InterPro" id="IPR013057">
    <property type="entry name" value="AA_transpt_TM"/>
</dbReference>
<dbReference type="PANTHER" id="PTHR48017">
    <property type="entry name" value="OS05G0424000 PROTEIN-RELATED"/>
    <property type="match status" value="1"/>
</dbReference>
<dbReference type="Pfam" id="PF01490">
    <property type="entry name" value="Aa_trans"/>
    <property type="match status" value="1"/>
</dbReference>
<proteinExistence type="evidence at protein level"/>
<accession>Q9LRB5</accession>
<keyword id="KW-0029">Amino-acid transport</keyword>
<keyword id="KW-1003">Cell membrane</keyword>
<keyword id="KW-0472">Membrane</keyword>
<keyword id="KW-1185">Reference proteome</keyword>
<keyword id="KW-0769">Symport</keyword>
<keyword id="KW-0812">Transmembrane</keyword>
<keyword id="KW-1133">Transmembrane helix</keyword>
<keyword id="KW-0813">Transport</keyword>
<sequence length="441" mass="49152">MGNSEMSASEVAAAKQKNVDDWLPITSSRNAKWWYSAFHNVTAMVGAGVLSLPYAMSNLGWGPGVTIMVMSWIITLYTLWQMVEMHEIVPGKRLDRYHELGQHAFGEKLGLWIVVPQQLIVEVGVDIVYMVTGGASLKKVHQLVCPDCKEIRTTFWIMIFASVHFVISHLPNFNSISIISLAAAVMSLTYSTIAWAASVHKGVHPDVDYSPRASTDVGKVFNFLNALGDVAFAYAGHNVVLEIQATIPSTPEMPSKVPMWRGVIVAYIVVAICYFPVAFLGYYIFGNSVDDNILITLEKPIWLIAMANMFVVIHVIGSYQIFAMPVFDMLETVLVKKMNFNPSFKLRFITRSLYVAFTMIVAICVPFFGGLLGFFGGFAFAPTTYYLPCIMWLVLKKPKRFGLSWTANWFCIIVGVLLTILAPIGGLRTIIINAKTYKFFS</sequence>
<evidence type="ECO:0000255" key="1"/>
<evidence type="ECO:0000269" key="2">
    <source>
    </source>
</evidence>
<evidence type="ECO:0000305" key="3"/>
<gene>
    <name type="primary">LHT2</name>
    <name type="synonym">AATL2</name>
    <name type="ordered locus">At1g24400</name>
    <name type="ORF">F21J9.6</name>
</gene>
<feature type="chain" id="PRO_0000387970" description="Lysine histidine transporter 2">
    <location>
        <begin position="1"/>
        <end position="441"/>
    </location>
</feature>
<feature type="topological domain" description="Cytoplasmic" evidence="1">
    <location>
        <begin position="1"/>
        <end position="32"/>
    </location>
</feature>
<feature type="transmembrane region" description="Helical" evidence="1">
    <location>
        <begin position="33"/>
        <end position="53"/>
    </location>
</feature>
<feature type="topological domain" description="Extracellular" evidence="1">
    <location>
        <begin position="54"/>
        <end position="58"/>
    </location>
</feature>
<feature type="transmembrane region" description="Helical" evidence="1">
    <location>
        <begin position="59"/>
        <end position="79"/>
    </location>
</feature>
<feature type="topological domain" description="Cytoplasmic" evidence="1">
    <location>
        <begin position="80"/>
        <end position="110"/>
    </location>
</feature>
<feature type="transmembrane region" description="Helical" evidence="1">
    <location>
        <begin position="111"/>
        <end position="131"/>
    </location>
</feature>
<feature type="topological domain" description="Extracellular" evidence="1">
    <location>
        <begin position="132"/>
        <end position="152"/>
    </location>
</feature>
<feature type="transmembrane region" description="Helical" evidence="1">
    <location>
        <begin position="153"/>
        <end position="173"/>
    </location>
</feature>
<feature type="topological domain" description="Cytoplasmic" evidence="1">
    <location>
        <begin position="174"/>
        <end position="175"/>
    </location>
</feature>
<feature type="transmembrane region" description="Helical" evidence="1">
    <location>
        <begin position="176"/>
        <end position="196"/>
    </location>
</feature>
<feature type="topological domain" description="Extracellular" evidence="1">
    <location>
        <begin position="197"/>
        <end position="222"/>
    </location>
</feature>
<feature type="transmembrane region" description="Helical" evidence="1">
    <location>
        <begin position="223"/>
        <end position="243"/>
    </location>
</feature>
<feature type="topological domain" description="Cytoplasmic" evidence="1">
    <location>
        <begin position="244"/>
        <end position="263"/>
    </location>
</feature>
<feature type="transmembrane region" description="Helical" evidence="1">
    <location>
        <begin position="264"/>
        <end position="284"/>
    </location>
</feature>
<feature type="topological domain" description="Extracellular" evidence="1">
    <location>
        <begin position="285"/>
        <end position="300"/>
    </location>
</feature>
<feature type="transmembrane region" description="Helical" evidence="1">
    <location>
        <begin position="301"/>
        <end position="321"/>
    </location>
</feature>
<feature type="topological domain" description="Cytoplasmic" evidence="1">
    <location>
        <begin position="322"/>
        <end position="347"/>
    </location>
</feature>
<feature type="transmembrane region" description="Helical" evidence="1">
    <location>
        <begin position="348"/>
        <end position="370"/>
    </location>
</feature>
<feature type="topological domain" description="Extracellular" evidence="1">
    <location>
        <begin position="371"/>
        <end position="373"/>
    </location>
</feature>
<feature type="transmembrane region" description="Helical" evidence="1">
    <location>
        <begin position="374"/>
        <end position="396"/>
    </location>
</feature>
<feature type="topological domain" description="Cytoplasmic" evidence="1">
    <location>
        <begin position="397"/>
        <end position="406"/>
    </location>
</feature>
<feature type="transmembrane region" description="Helical" evidence="1">
    <location>
        <begin position="407"/>
        <end position="427"/>
    </location>
</feature>
<feature type="topological domain" description="Extracellular" evidence="1">
    <location>
        <begin position="428"/>
        <end position="441"/>
    </location>
</feature>
<feature type="sequence variant" description="In strain: cv. C24.">
    <original>V</original>
    <variation>I</variation>
    <location>
        <position position="361"/>
    </location>
</feature>
<reference key="1">
    <citation type="submission" date="2000-07" db="EMBL/GenBank/DDBJ databases">
        <title>Arabidopsis AATL2 mRNA encoding putative amino acid transporter.</title>
        <authorList>
            <person name="Uefuji H."/>
            <person name="Takase H."/>
            <person name="Hiratsuka K."/>
        </authorList>
    </citation>
    <scope>NUCLEOTIDE SEQUENCE [MRNA]</scope>
    <source>
        <strain>cv. Columbia</strain>
    </source>
</reference>
<reference key="2">
    <citation type="journal article" date="2000" name="Nature">
        <title>Sequence and analysis of chromosome 1 of the plant Arabidopsis thaliana.</title>
        <authorList>
            <person name="Theologis A."/>
            <person name="Ecker J.R."/>
            <person name="Palm C.J."/>
            <person name="Federspiel N.A."/>
            <person name="Kaul S."/>
            <person name="White O."/>
            <person name="Alonso J."/>
            <person name="Altafi H."/>
            <person name="Araujo R."/>
            <person name="Bowman C.L."/>
            <person name="Brooks S.Y."/>
            <person name="Buehler E."/>
            <person name="Chan A."/>
            <person name="Chao Q."/>
            <person name="Chen H."/>
            <person name="Cheuk R.F."/>
            <person name="Chin C.W."/>
            <person name="Chung M.K."/>
            <person name="Conn L."/>
            <person name="Conway A.B."/>
            <person name="Conway A.R."/>
            <person name="Creasy T.H."/>
            <person name="Dewar K."/>
            <person name="Dunn P."/>
            <person name="Etgu P."/>
            <person name="Feldblyum T.V."/>
            <person name="Feng J.-D."/>
            <person name="Fong B."/>
            <person name="Fujii C.Y."/>
            <person name="Gill J.E."/>
            <person name="Goldsmith A.D."/>
            <person name="Haas B."/>
            <person name="Hansen N.F."/>
            <person name="Hughes B."/>
            <person name="Huizar L."/>
            <person name="Hunter J.L."/>
            <person name="Jenkins J."/>
            <person name="Johnson-Hopson C."/>
            <person name="Khan S."/>
            <person name="Khaykin E."/>
            <person name="Kim C.J."/>
            <person name="Koo H.L."/>
            <person name="Kremenetskaia I."/>
            <person name="Kurtz D.B."/>
            <person name="Kwan A."/>
            <person name="Lam B."/>
            <person name="Langin-Hooper S."/>
            <person name="Lee A."/>
            <person name="Lee J.M."/>
            <person name="Lenz C.A."/>
            <person name="Li J.H."/>
            <person name="Li Y.-P."/>
            <person name="Lin X."/>
            <person name="Liu S.X."/>
            <person name="Liu Z.A."/>
            <person name="Luros J.S."/>
            <person name="Maiti R."/>
            <person name="Marziali A."/>
            <person name="Militscher J."/>
            <person name="Miranda M."/>
            <person name="Nguyen M."/>
            <person name="Nierman W.C."/>
            <person name="Osborne B.I."/>
            <person name="Pai G."/>
            <person name="Peterson J."/>
            <person name="Pham P.K."/>
            <person name="Rizzo M."/>
            <person name="Rooney T."/>
            <person name="Rowley D."/>
            <person name="Sakano H."/>
            <person name="Salzberg S.L."/>
            <person name="Schwartz J.R."/>
            <person name="Shinn P."/>
            <person name="Southwick A.M."/>
            <person name="Sun H."/>
            <person name="Tallon L.J."/>
            <person name="Tambunga G."/>
            <person name="Toriumi M.J."/>
            <person name="Town C.D."/>
            <person name="Utterback T."/>
            <person name="Van Aken S."/>
            <person name="Vaysberg M."/>
            <person name="Vysotskaia V.S."/>
            <person name="Walker M."/>
            <person name="Wu D."/>
            <person name="Yu G."/>
            <person name="Fraser C.M."/>
            <person name="Venter J.C."/>
            <person name="Davis R.W."/>
        </authorList>
    </citation>
    <scope>NUCLEOTIDE SEQUENCE [LARGE SCALE GENOMIC DNA]</scope>
    <source>
        <strain>cv. Columbia</strain>
    </source>
</reference>
<reference key="3">
    <citation type="journal article" date="2017" name="Plant J.">
        <title>Araport11: a complete reannotation of the Arabidopsis thaliana reference genome.</title>
        <authorList>
            <person name="Cheng C.Y."/>
            <person name="Krishnakumar V."/>
            <person name="Chan A.P."/>
            <person name="Thibaud-Nissen F."/>
            <person name="Schobel S."/>
            <person name="Town C.D."/>
        </authorList>
    </citation>
    <scope>GENOME REANNOTATION</scope>
    <source>
        <strain>cv. Columbia</strain>
    </source>
</reference>
<reference key="4">
    <citation type="journal article" date="2004" name="Plant J.">
        <title>Selective expression of a novel high-affinity transport system for acidic and neutral amino acids in the tapetum cells of Arabidopsis flowers.</title>
        <authorList>
            <person name="Lee Y.-H."/>
            <person name="Tegeder M."/>
        </authorList>
    </citation>
    <scope>NUCLEOTIDE SEQUENCE [MRNA]</scope>
    <scope>FUNCTION</scope>
    <scope>BIOPHYSICOCHEMICAL PROPERTIES</scope>
    <scope>TISSUE SPECIFICITY</scope>
    <source>
        <strain>cv. C24</strain>
    </source>
</reference>
<name>LHT2_ARATH</name>
<organism>
    <name type="scientific">Arabidopsis thaliana</name>
    <name type="common">Mouse-ear cress</name>
    <dbReference type="NCBI Taxonomy" id="3702"/>
    <lineage>
        <taxon>Eukaryota</taxon>
        <taxon>Viridiplantae</taxon>
        <taxon>Streptophyta</taxon>
        <taxon>Embryophyta</taxon>
        <taxon>Tracheophyta</taxon>
        <taxon>Spermatophyta</taxon>
        <taxon>Magnoliopsida</taxon>
        <taxon>eudicotyledons</taxon>
        <taxon>Gunneridae</taxon>
        <taxon>Pentapetalae</taxon>
        <taxon>rosids</taxon>
        <taxon>malvids</taxon>
        <taxon>Brassicales</taxon>
        <taxon>Brassicaceae</taxon>
        <taxon>Camelineae</taxon>
        <taxon>Arabidopsis</taxon>
    </lineage>
</organism>
<comment type="function">
    <text evidence="2">Amino acid-proton symporter. Transporter with a broad specificity for neutral and acidic amino acids. Basic amino acids are only marginally transported. Involved in import of amino acids into the tapetum cells for synthesis of compounds important for microspore structure.</text>
</comment>
<comment type="activity regulation">
    <text>Inhibited by diethylstibestrol (DES), 2,4-dinitrophenol (DNP) and carbonlycyanide m-chlorophenylhydrazone (CCCP).</text>
</comment>
<comment type="biophysicochemical properties">
    <kinetics>
        <KM evidence="2">72 uM for aspartate</KM>
        <KM evidence="2">13 uM for proline</KM>
    </kinetics>
    <phDependence>
        <text evidence="2">Optimum pH is 4-5.</text>
    </phDependence>
</comment>
<comment type="subcellular location">
    <subcellularLocation>
        <location evidence="3">Cell membrane</location>
        <topology evidence="3">Multi-pass membrane protein</topology>
    </subcellularLocation>
</comment>
<comment type="tissue specificity">
    <text evidence="2">Expressed in flower buds and to lower levels in leaves and stems. Not detected in roots and siliques. Restricted to the tapetum cell layer.</text>
</comment>
<comment type="similarity">
    <text evidence="3">Belongs to the amino acid/polyamine transporter 2 family. Amino acid/auxin permease (AAAP) (TC 2.A.18.2) subfamily.</text>
</comment>
<protein>
    <recommendedName>
        <fullName>Lysine histidine transporter 2</fullName>
        <shortName>AtLHT2</shortName>
    </recommendedName>
    <alternativeName>
        <fullName>Amino acid transporter-like protein 2</fullName>
    </alternativeName>
</protein>